<evidence type="ECO:0000250" key="1"/>
<evidence type="ECO:0000255" key="2"/>
<evidence type="ECO:0000255" key="3">
    <source>
        <dbReference type="PROSITE-ProRule" id="PRU00805"/>
    </source>
</evidence>
<evidence type="ECO:0000269" key="4">
    <source>
    </source>
</evidence>
<evidence type="ECO:0000305" key="5"/>
<proteinExistence type="evidence at transcript level"/>
<accession>Q9XG83</accession>
<comment type="function">
    <text evidence="4">Catalyzes the 2-beta-hydroxylation of several biologically active gibberellins, leading to the homeostatic regulation of their endogenous level. Catabolism of gibberellins (GAs) plays a central role in plant development. Converts GA9/GA20 to GA51/GA29 and GA4/GA1 to GA34/GA8.</text>
</comment>
<comment type="catalytic activity">
    <reaction>
        <text>gibberellin A1 + 2-oxoglutarate + O2 = gibberellin A8 + succinate + CO2</text>
        <dbReference type="Rhea" id="RHEA:15005"/>
        <dbReference type="ChEBI" id="CHEBI:15379"/>
        <dbReference type="ChEBI" id="CHEBI:16526"/>
        <dbReference type="ChEBI" id="CHEBI:16810"/>
        <dbReference type="ChEBI" id="CHEBI:30031"/>
        <dbReference type="ChEBI" id="CHEBI:58524"/>
        <dbReference type="ChEBI" id="CHEBI:58594"/>
        <dbReference type="EC" id="1.14.11.13"/>
    </reaction>
</comment>
<comment type="cofactor">
    <cofactor evidence="1">
        <name>Fe cation</name>
        <dbReference type="ChEBI" id="CHEBI:24875"/>
    </cofactor>
</comment>
<comment type="pathway">
    <text>Plant hormone biosynthesis; gibberellin biosynthesis.</text>
</comment>
<comment type="similarity">
    <text evidence="5">Belongs to the iron/ascorbate-dependent oxidoreductase family. GA2OX subfamily.</text>
</comment>
<organism>
    <name type="scientific">Phaseolus coccineus</name>
    <name type="common">Scarlet runner bean</name>
    <name type="synonym">Phaseolus multiflorus</name>
    <dbReference type="NCBI Taxonomy" id="3886"/>
    <lineage>
        <taxon>Eukaryota</taxon>
        <taxon>Viridiplantae</taxon>
        <taxon>Streptophyta</taxon>
        <taxon>Embryophyta</taxon>
        <taxon>Tracheophyta</taxon>
        <taxon>Spermatophyta</taxon>
        <taxon>Magnoliopsida</taxon>
        <taxon>eudicotyledons</taxon>
        <taxon>Gunneridae</taxon>
        <taxon>Pentapetalae</taxon>
        <taxon>rosids</taxon>
        <taxon>fabids</taxon>
        <taxon>Fabales</taxon>
        <taxon>Fabaceae</taxon>
        <taxon>Papilionoideae</taxon>
        <taxon>50 kb inversion clade</taxon>
        <taxon>NPAAA clade</taxon>
        <taxon>indigoferoid/millettioid clade</taxon>
        <taxon>Phaseoleae</taxon>
        <taxon>Phaseolus</taxon>
    </lineage>
</organism>
<name>G2OX_PHACN</name>
<gene>
    <name type="primary">GA2OX1</name>
</gene>
<keyword id="KW-0223">Dioxygenase</keyword>
<keyword id="KW-0408">Iron</keyword>
<keyword id="KW-0479">Metal-binding</keyword>
<keyword id="KW-0560">Oxidoreductase</keyword>
<feature type="chain" id="PRO_0000067310" description="Gibberellin 2-beta-dioxygenase">
    <location>
        <begin position="1"/>
        <end position="332"/>
    </location>
</feature>
<feature type="domain" description="Fe2OG dioxygenase" evidence="3">
    <location>
        <begin position="175"/>
        <end position="280"/>
    </location>
</feature>
<feature type="active site" evidence="2">
    <location>
        <position position="271"/>
    </location>
</feature>
<feature type="binding site" evidence="3">
    <location>
        <position position="204"/>
    </location>
    <ligand>
        <name>Fe cation</name>
        <dbReference type="ChEBI" id="CHEBI:24875"/>
    </ligand>
</feature>
<feature type="binding site" evidence="3">
    <location>
        <position position="206"/>
    </location>
    <ligand>
        <name>Fe cation</name>
        <dbReference type="ChEBI" id="CHEBI:24875"/>
    </ligand>
</feature>
<feature type="binding site" evidence="3">
    <location>
        <position position="261"/>
    </location>
    <ligand>
        <name>Fe cation</name>
        <dbReference type="ChEBI" id="CHEBI:24875"/>
    </ligand>
</feature>
<protein>
    <recommendedName>
        <fullName>Gibberellin 2-beta-dioxygenase</fullName>
        <ecNumber>1.14.11.13</ecNumber>
    </recommendedName>
    <alternativeName>
        <fullName>GA 2-oxidase</fullName>
    </alternativeName>
    <alternativeName>
        <fullName>Gibberellin 2-beta-hydroxylase</fullName>
    </alternativeName>
    <alternativeName>
        <fullName>Gibberellin 2-oxidase</fullName>
    </alternativeName>
</protein>
<sequence>MVVLSQPALNQFFLLKPFKSTPLFTGIPVVDLTHPDAKNLIVNACRDFGFFKLVNHGVPLELMANLENEALRFFKKSQSEKDRAGPPDPFGYGSKRIGPNGDVGWVEYLLLNTNPDVISPKSLCIFRENPHHFRAVVENYITAVKNMCYAVLELMAEGLGIRQRNTLSRLLKDEKSDSCFRLNHYPPCPEVQALNRNLVGFGEHTDPQIISVLRSNSTSGLQICLTDGTWVSVPPDQTSFFINVGDALQVMTNGRFKSVKHRVLADTTKSRLSMIYFGGPALSENIAPLPSVMLKGEECLYKEFTWCEYKKAAYTSRLADNRLAPFQKSAAD</sequence>
<reference key="1">
    <citation type="journal article" date="1999" name="Proc. Natl. Acad. Sci. U.S.A.">
        <title>Molecular cloning and functional expression of gibberellin 2-oxidases, multifunctional enzymes involved in gibberellin deactivation.</title>
        <authorList>
            <person name="Thomas S.G."/>
            <person name="Phillips A.L."/>
            <person name="Hedden P."/>
        </authorList>
    </citation>
    <scope>NUCLEOTIDE SEQUENCE [MRNA]</scope>
    <scope>FUNCTION</scope>
    <source>
        <tissue>Embryo</tissue>
    </source>
</reference>
<dbReference type="EC" id="1.14.11.13"/>
<dbReference type="EMBL" id="AJ132438">
    <property type="protein sequence ID" value="CAB41036.1"/>
    <property type="molecule type" value="mRNA"/>
</dbReference>
<dbReference type="SMR" id="Q9XG83"/>
<dbReference type="BioCyc" id="MetaCyc:MONOMER-11631"/>
<dbReference type="BRENDA" id="1.14.11.13">
    <property type="organism ID" value="4739"/>
</dbReference>
<dbReference type="UniPathway" id="UPA00390"/>
<dbReference type="GO" id="GO:0045543">
    <property type="term" value="F:gibberellin 2-beta-dioxygenase activity"/>
    <property type="evidence" value="ECO:0007669"/>
    <property type="project" value="UniProtKB-EC"/>
</dbReference>
<dbReference type="GO" id="GO:0046872">
    <property type="term" value="F:metal ion binding"/>
    <property type="evidence" value="ECO:0007669"/>
    <property type="project" value="UniProtKB-KW"/>
</dbReference>
<dbReference type="GO" id="GO:0009686">
    <property type="term" value="P:gibberellin biosynthetic process"/>
    <property type="evidence" value="ECO:0007669"/>
    <property type="project" value="UniProtKB-UniPathway"/>
</dbReference>
<dbReference type="FunFam" id="2.60.120.330:FF:000014">
    <property type="entry name" value="Gibberellin 2-beta-dioxygenase 1"/>
    <property type="match status" value="1"/>
</dbReference>
<dbReference type="Gene3D" id="2.60.120.330">
    <property type="entry name" value="B-lactam Antibiotic, Isopenicillin N Synthase, Chain"/>
    <property type="match status" value="1"/>
</dbReference>
<dbReference type="InterPro" id="IPR026992">
    <property type="entry name" value="DIOX_N"/>
</dbReference>
<dbReference type="InterPro" id="IPR044861">
    <property type="entry name" value="IPNS-like_FE2OG_OXY"/>
</dbReference>
<dbReference type="InterPro" id="IPR027443">
    <property type="entry name" value="IPNS-like_sf"/>
</dbReference>
<dbReference type="InterPro" id="IPR050231">
    <property type="entry name" value="Iron_ascorbate_oxido_reductase"/>
</dbReference>
<dbReference type="InterPro" id="IPR005123">
    <property type="entry name" value="Oxoglu/Fe-dep_dioxygenase_dom"/>
</dbReference>
<dbReference type="PANTHER" id="PTHR47990">
    <property type="entry name" value="2-OXOGLUTARATE (2OG) AND FE(II)-DEPENDENT OXYGENASE SUPERFAMILY PROTEIN-RELATED"/>
    <property type="match status" value="1"/>
</dbReference>
<dbReference type="Pfam" id="PF03171">
    <property type="entry name" value="2OG-FeII_Oxy"/>
    <property type="match status" value="1"/>
</dbReference>
<dbReference type="Pfam" id="PF14226">
    <property type="entry name" value="DIOX_N"/>
    <property type="match status" value="1"/>
</dbReference>
<dbReference type="PRINTS" id="PR00682">
    <property type="entry name" value="IPNSYNTHASE"/>
</dbReference>
<dbReference type="SUPFAM" id="SSF51197">
    <property type="entry name" value="Clavaminate synthase-like"/>
    <property type="match status" value="1"/>
</dbReference>
<dbReference type="PROSITE" id="PS51471">
    <property type="entry name" value="FE2OG_OXY"/>
    <property type="match status" value="1"/>
</dbReference>